<accession>A1KJW2</accession>
<protein>
    <recommendedName>
        <fullName evidence="1">D-aminoacyl-tRNA deacylase</fullName>
        <shortName evidence="1">DTD</shortName>
        <ecNumber evidence="1">3.1.1.96</ecNumber>
    </recommendedName>
    <alternativeName>
        <fullName evidence="1">Gly-tRNA(Ala) deacylase</fullName>
    </alternativeName>
</protein>
<feature type="chain" id="PRO_1000050855" description="D-aminoacyl-tRNA deacylase">
    <location>
        <begin position="1"/>
        <end position="143"/>
    </location>
</feature>
<feature type="short sequence motif" description="Gly-cisPro motif, important for rejection of L-amino acids" evidence="1">
    <location>
        <begin position="135"/>
        <end position="136"/>
    </location>
</feature>
<proteinExistence type="inferred from homology"/>
<gene>
    <name evidence="1" type="primary">dtd</name>
    <name type="ordered locus">BCG_1936c</name>
</gene>
<dbReference type="EC" id="3.1.1.96" evidence="1"/>
<dbReference type="EMBL" id="AM408590">
    <property type="protein sequence ID" value="CAL71923.1"/>
    <property type="molecule type" value="Genomic_DNA"/>
</dbReference>
<dbReference type="RefSeq" id="WP_011799228.1">
    <property type="nucleotide sequence ID" value="NC_008769.1"/>
</dbReference>
<dbReference type="SMR" id="A1KJW2"/>
<dbReference type="KEGG" id="mbb:BCG_1936c"/>
<dbReference type="HOGENOM" id="CLU_076901_1_2_11"/>
<dbReference type="Proteomes" id="UP000001472">
    <property type="component" value="Chromosome"/>
</dbReference>
<dbReference type="GO" id="GO:0005737">
    <property type="term" value="C:cytoplasm"/>
    <property type="evidence" value="ECO:0007669"/>
    <property type="project" value="UniProtKB-SubCell"/>
</dbReference>
<dbReference type="GO" id="GO:0051500">
    <property type="term" value="F:D-tyrosyl-tRNA(Tyr) deacylase activity"/>
    <property type="evidence" value="ECO:0007669"/>
    <property type="project" value="TreeGrafter"/>
</dbReference>
<dbReference type="GO" id="GO:0106026">
    <property type="term" value="F:Gly-tRNA(Ala) deacylase activity"/>
    <property type="evidence" value="ECO:0007669"/>
    <property type="project" value="UniProtKB-UniRule"/>
</dbReference>
<dbReference type="GO" id="GO:0043908">
    <property type="term" value="F:Ser(Gly)-tRNA(Ala) hydrolase activity"/>
    <property type="evidence" value="ECO:0007669"/>
    <property type="project" value="UniProtKB-UniRule"/>
</dbReference>
<dbReference type="GO" id="GO:0000049">
    <property type="term" value="F:tRNA binding"/>
    <property type="evidence" value="ECO:0007669"/>
    <property type="project" value="UniProtKB-UniRule"/>
</dbReference>
<dbReference type="GO" id="GO:0019478">
    <property type="term" value="P:D-amino acid catabolic process"/>
    <property type="evidence" value="ECO:0007669"/>
    <property type="project" value="UniProtKB-UniRule"/>
</dbReference>
<dbReference type="CDD" id="cd00563">
    <property type="entry name" value="Dtyr_deacylase"/>
    <property type="match status" value="1"/>
</dbReference>
<dbReference type="FunFam" id="3.50.80.10:FF:000002">
    <property type="entry name" value="D-aminoacyl-tRNA deacylase"/>
    <property type="match status" value="1"/>
</dbReference>
<dbReference type="Gene3D" id="3.50.80.10">
    <property type="entry name" value="D-tyrosyl-tRNA(Tyr) deacylase"/>
    <property type="match status" value="1"/>
</dbReference>
<dbReference type="HAMAP" id="MF_00518">
    <property type="entry name" value="Deacylase_Dtd"/>
    <property type="match status" value="1"/>
</dbReference>
<dbReference type="InterPro" id="IPR003732">
    <property type="entry name" value="Daa-tRNA_deacyls_DTD"/>
</dbReference>
<dbReference type="InterPro" id="IPR023509">
    <property type="entry name" value="DTD-like_sf"/>
</dbReference>
<dbReference type="NCBIfam" id="TIGR00256">
    <property type="entry name" value="D-aminoacyl-tRNA deacylase"/>
    <property type="match status" value="1"/>
</dbReference>
<dbReference type="PANTHER" id="PTHR10472:SF5">
    <property type="entry name" value="D-AMINOACYL-TRNA DEACYLASE 1"/>
    <property type="match status" value="1"/>
</dbReference>
<dbReference type="PANTHER" id="PTHR10472">
    <property type="entry name" value="D-TYROSYL-TRNA TYR DEACYLASE"/>
    <property type="match status" value="1"/>
</dbReference>
<dbReference type="Pfam" id="PF02580">
    <property type="entry name" value="Tyr_Deacylase"/>
    <property type="match status" value="1"/>
</dbReference>
<dbReference type="SUPFAM" id="SSF69500">
    <property type="entry name" value="DTD-like"/>
    <property type="match status" value="1"/>
</dbReference>
<name>DTD_MYCBP</name>
<reference key="1">
    <citation type="journal article" date="2007" name="Proc. Natl. Acad. Sci. U.S.A.">
        <title>Genome plasticity of BCG and impact on vaccine efficacy.</title>
        <authorList>
            <person name="Brosch R."/>
            <person name="Gordon S.V."/>
            <person name="Garnier T."/>
            <person name="Eiglmeier K."/>
            <person name="Frigui W."/>
            <person name="Valenti P."/>
            <person name="Dos Santos S."/>
            <person name="Duthoy S."/>
            <person name="Lacroix C."/>
            <person name="Garcia-Pelayo C."/>
            <person name="Inwald J.K."/>
            <person name="Golby P."/>
            <person name="Garcia J.N."/>
            <person name="Hewinson R.G."/>
            <person name="Behr M.A."/>
            <person name="Quail M.A."/>
            <person name="Churcher C."/>
            <person name="Barrell B.G."/>
            <person name="Parkhill J."/>
            <person name="Cole S.T."/>
        </authorList>
    </citation>
    <scope>NUCLEOTIDE SEQUENCE [LARGE SCALE GENOMIC DNA]</scope>
    <source>
        <strain>BCG / Pasteur 1173P2</strain>
    </source>
</reference>
<comment type="function">
    <text evidence="1">An aminoacyl-tRNA editing enzyme that deacylates mischarged D-aminoacyl-tRNAs. Also deacylates mischarged glycyl-tRNA(Ala), protecting cells against glycine mischarging by AlaRS. Acts via tRNA-based rather than protein-based catalysis; rejects L-amino acids rather than detecting D-amino acids in the active site. By recycling D-aminoacyl-tRNA to D-amino acids and free tRNA molecules, this enzyme counteracts the toxicity associated with the formation of D-aminoacyl-tRNA entities in vivo and helps enforce protein L-homochirality.</text>
</comment>
<comment type="catalytic activity">
    <reaction evidence="1">
        <text>glycyl-tRNA(Ala) + H2O = tRNA(Ala) + glycine + H(+)</text>
        <dbReference type="Rhea" id="RHEA:53744"/>
        <dbReference type="Rhea" id="RHEA-COMP:9657"/>
        <dbReference type="Rhea" id="RHEA-COMP:13640"/>
        <dbReference type="ChEBI" id="CHEBI:15377"/>
        <dbReference type="ChEBI" id="CHEBI:15378"/>
        <dbReference type="ChEBI" id="CHEBI:57305"/>
        <dbReference type="ChEBI" id="CHEBI:78442"/>
        <dbReference type="ChEBI" id="CHEBI:78522"/>
        <dbReference type="EC" id="3.1.1.96"/>
    </reaction>
</comment>
<comment type="catalytic activity">
    <reaction evidence="1">
        <text>a D-aminoacyl-tRNA + H2O = a tRNA + a D-alpha-amino acid + H(+)</text>
        <dbReference type="Rhea" id="RHEA:13953"/>
        <dbReference type="Rhea" id="RHEA-COMP:10123"/>
        <dbReference type="Rhea" id="RHEA-COMP:10124"/>
        <dbReference type="ChEBI" id="CHEBI:15377"/>
        <dbReference type="ChEBI" id="CHEBI:15378"/>
        <dbReference type="ChEBI" id="CHEBI:59871"/>
        <dbReference type="ChEBI" id="CHEBI:78442"/>
        <dbReference type="ChEBI" id="CHEBI:79333"/>
        <dbReference type="EC" id="3.1.1.96"/>
    </reaction>
</comment>
<comment type="subunit">
    <text evidence="1">Homodimer.</text>
</comment>
<comment type="subcellular location">
    <subcellularLocation>
        <location evidence="1">Cytoplasm</location>
    </subcellularLocation>
</comment>
<comment type="domain">
    <text evidence="1">A Gly-cisPro motif from one monomer fits into the active site of the other monomer to allow specific chiral rejection of L-amino acids.</text>
</comment>
<comment type="similarity">
    <text evidence="1">Belongs to the DTD family.</text>
</comment>
<evidence type="ECO:0000255" key="1">
    <source>
        <dbReference type="HAMAP-Rule" id="MF_00518"/>
    </source>
</evidence>
<sequence length="143" mass="15058">MRVLVQRVSSAAVRVDGRVVGAIRPDGQGLVAFVGVTHGDDLDKARRLAEKLWNLRVLAGEKSASDMHAPILVISQFTLYADTAKGRRPSWNAAAPGAVAQPLIAAFAAALRQLGAHVEAGVFGAHMQVELVNDGPVTVMLEG</sequence>
<keyword id="KW-0963">Cytoplasm</keyword>
<keyword id="KW-0378">Hydrolase</keyword>
<keyword id="KW-0694">RNA-binding</keyword>
<keyword id="KW-0820">tRNA-binding</keyword>
<organism>
    <name type="scientific">Mycobacterium bovis (strain BCG / Pasteur 1173P2)</name>
    <dbReference type="NCBI Taxonomy" id="410289"/>
    <lineage>
        <taxon>Bacteria</taxon>
        <taxon>Bacillati</taxon>
        <taxon>Actinomycetota</taxon>
        <taxon>Actinomycetes</taxon>
        <taxon>Mycobacteriales</taxon>
        <taxon>Mycobacteriaceae</taxon>
        <taxon>Mycobacterium</taxon>
        <taxon>Mycobacterium tuberculosis complex</taxon>
    </lineage>
</organism>